<name>PA2SA_AUSSU</name>
<accession>P59067</accession>
<dbReference type="EC" id="3.1.1.4"/>
<dbReference type="SMR" id="P59067"/>
<dbReference type="GO" id="GO:0005576">
    <property type="term" value="C:extracellular region"/>
    <property type="evidence" value="ECO:0007669"/>
    <property type="project" value="UniProtKB-SubCell"/>
</dbReference>
<dbReference type="GO" id="GO:0005509">
    <property type="term" value="F:calcium ion binding"/>
    <property type="evidence" value="ECO:0007669"/>
    <property type="project" value="InterPro"/>
</dbReference>
<dbReference type="GO" id="GO:0047498">
    <property type="term" value="F:calcium-dependent phospholipase A2 activity"/>
    <property type="evidence" value="ECO:0007669"/>
    <property type="project" value="TreeGrafter"/>
</dbReference>
<dbReference type="GO" id="GO:0005543">
    <property type="term" value="F:phospholipid binding"/>
    <property type="evidence" value="ECO:0007669"/>
    <property type="project" value="TreeGrafter"/>
</dbReference>
<dbReference type="GO" id="GO:0090729">
    <property type="term" value="F:toxin activity"/>
    <property type="evidence" value="ECO:0007669"/>
    <property type="project" value="UniProtKB-KW"/>
</dbReference>
<dbReference type="GO" id="GO:0050482">
    <property type="term" value="P:arachidonate secretion"/>
    <property type="evidence" value="ECO:0007669"/>
    <property type="project" value="InterPro"/>
</dbReference>
<dbReference type="GO" id="GO:0016042">
    <property type="term" value="P:lipid catabolic process"/>
    <property type="evidence" value="ECO:0007669"/>
    <property type="project" value="UniProtKB-KW"/>
</dbReference>
<dbReference type="GO" id="GO:0006644">
    <property type="term" value="P:phospholipid metabolic process"/>
    <property type="evidence" value="ECO:0007669"/>
    <property type="project" value="InterPro"/>
</dbReference>
<dbReference type="CDD" id="cd00125">
    <property type="entry name" value="PLA2c"/>
    <property type="match status" value="1"/>
</dbReference>
<dbReference type="Gene3D" id="1.20.90.10">
    <property type="entry name" value="Phospholipase A2 domain"/>
    <property type="match status" value="1"/>
</dbReference>
<dbReference type="InterPro" id="IPR001211">
    <property type="entry name" value="PLipase_A2"/>
</dbReference>
<dbReference type="InterPro" id="IPR016090">
    <property type="entry name" value="PLipase_A2_dom"/>
</dbReference>
<dbReference type="InterPro" id="IPR036444">
    <property type="entry name" value="PLipase_A2_dom_sf"/>
</dbReference>
<dbReference type="InterPro" id="IPR033113">
    <property type="entry name" value="PLipase_A2_His_AS"/>
</dbReference>
<dbReference type="PANTHER" id="PTHR11716:SF106">
    <property type="entry name" value="PHOSPHOLIPASE A2 A2-ACTITOXIN-UCS2A-LIKE"/>
    <property type="match status" value="1"/>
</dbReference>
<dbReference type="PANTHER" id="PTHR11716">
    <property type="entry name" value="PHOSPHOLIPASE A2 FAMILY MEMBER"/>
    <property type="match status" value="1"/>
</dbReference>
<dbReference type="Pfam" id="PF00068">
    <property type="entry name" value="Phospholip_A2_1"/>
    <property type="match status" value="1"/>
</dbReference>
<dbReference type="PRINTS" id="PR00389">
    <property type="entry name" value="PHPHLIPASEA2"/>
</dbReference>
<dbReference type="SMART" id="SM00085">
    <property type="entry name" value="PA2c"/>
    <property type="match status" value="1"/>
</dbReference>
<dbReference type="SUPFAM" id="SSF48619">
    <property type="entry name" value="Phospholipase A2, PLA2"/>
    <property type="match status" value="1"/>
</dbReference>
<dbReference type="PROSITE" id="PS00118">
    <property type="entry name" value="PA2_HIS"/>
    <property type="match status" value="1"/>
</dbReference>
<sequence length="62" mass="7035">NLYQFKNMIQCANHGRRATWHYLDYGCYCGPGGLGTPVDELDRCCKTHDDCYIEAGKKGCFP</sequence>
<organism>
    <name type="scientific">Austrelaps superbus</name>
    <name type="common">Lowland copperhead snake</name>
    <name type="synonym">Hoplocephalus superbus</name>
    <dbReference type="NCBI Taxonomy" id="29156"/>
    <lineage>
        <taxon>Eukaryota</taxon>
        <taxon>Metazoa</taxon>
        <taxon>Chordata</taxon>
        <taxon>Craniata</taxon>
        <taxon>Vertebrata</taxon>
        <taxon>Euteleostomi</taxon>
        <taxon>Lepidosauria</taxon>
        <taxon>Squamata</taxon>
        <taxon>Bifurcata</taxon>
        <taxon>Unidentata</taxon>
        <taxon>Episquamata</taxon>
        <taxon>Toxicofera</taxon>
        <taxon>Serpentes</taxon>
        <taxon>Colubroidea</taxon>
        <taxon>Elapidae</taxon>
        <taxon>Hydrophiinae</taxon>
        <taxon>Austrelaps</taxon>
    </lineage>
</organism>
<proteinExistence type="evidence at protein level"/>
<feature type="chain" id="PRO_0000161610" description="Phospholipase A2 superbin a">
    <location>
        <begin position="1"/>
        <end position="62" status="greater than"/>
    </location>
</feature>
<feature type="active site" evidence="2">
    <location>
        <position position="48"/>
    </location>
</feature>
<feature type="binding site" evidence="1">
    <location>
        <position position="28"/>
    </location>
    <ligand>
        <name>Ca(2+)</name>
        <dbReference type="ChEBI" id="CHEBI:29108"/>
    </ligand>
</feature>
<feature type="binding site" evidence="1">
    <location>
        <position position="30"/>
    </location>
    <ligand>
        <name>Ca(2+)</name>
        <dbReference type="ChEBI" id="CHEBI:29108"/>
    </ligand>
</feature>
<feature type="binding site" evidence="1">
    <location>
        <position position="32"/>
    </location>
    <ligand>
        <name>Ca(2+)</name>
        <dbReference type="ChEBI" id="CHEBI:29108"/>
    </ligand>
</feature>
<feature type="binding site" evidence="1">
    <location>
        <position position="49"/>
    </location>
    <ligand>
        <name>Ca(2+)</name>
        <dbReference type="ChEBI" id="CHEBI:29108"/>
    </ligand>
</feature>
<feature type="disulfide bond" evidence="1">
    <location>
        <begin position="29"/>
        <end position="45"/>
    </location>
</feature>
<feature type="non-terminal residue">
    <location>
        <position position="62"/>
    </location>
</feature>
<comment type="function">
    <text>Snake venom phospholipase A2 (PLA2) that inhibits collagen-induced platelet aggregation. In terms of inhibition of platelet aggregation, superbin a is more potent as superbin b, c, and d. PLA2 catalyzes the calcium-dependent hydrolysis of the 2-acyl groups in 3-sn-phosphoglycerides.</text>
</comment>
<comment type="catalytic activity">
    <reaction evidence="2">
        <text>a 1,2-diacyl-sn-glycero-3-phosphocholine + H2O = a 1-acyl-sn-glycero-3-phosphocholine + a fatty acid + H(+)</text>
        <dbReference type="Rhea" id="RHEA:15801"/>
        <dbReference type="ChEBI" id="CHEBI:15377"/>
        <dbReference type="ChEBI" id="CHEBI:15378"/>
        <dbReference type="ChEBI" id="CHEBI:28868"/>
        <dbReference type="ChEBI" id="CHEBI:57643"/>
        <dbReference type="ChEBI" id="CHEBI:58168"/>
        <dbReference type="EC" id="3.1.1.4"/>
    </reaction>
</comment>
<comment type="cofactor">
    <cofactor evidence="1">
        <name>Ca(2+)</name>
        <dbReference type="ChEBI" id="CHEBI:29108"/>
    </cofactor>
    <text evidence="1">Binds 1 Ca(2+) ion.</text>
</comment>
<comment type="subcellular location">
    <subcellularLocation>
        <location>Secreted</location>
    </subcellularLocation>
</comment>
<comment type="tissue specificity">
    <text>Expressed by the venom gland.</text>
</comment>
<comment type="mass spectrometry" mass="13235.86" error="0.39" method="Electrospray" evidence="3"/>
<comment type="similarity">
    <text evidence="4">Belongs to the phospholipase A2 family. Group I subfamily. D49 sub-subfamily.</text>
</comment>
<evidence type="ECO:0000250" key="1"/>
<evidence type="ECO:0000255" key="2">
    <source>
        <dbReference type="PROSITE-ProRule" id="PRU10035"/>
    </source>
</evidence>
<evidence type="ECO:0000269" key="3">
    <source>
    </source>
</evidence>
<evidence type="ECO:0000305" key="4"/>
<protein>
    <recommendedName>
        <fullName>Phospholipase A2 superbin a</fullName>
        <shortName>svPLA2</shortName>
        <ecNumber>3.1.1.4</ecNumber>
    </recommendedName>
    <alternativeName>
        <fullName>Phosphatidylcholine 2-acylhydrolase</fullName>
    </alternativeName>
</protein>
<keyword id="KW-0106">Calcium</keyword>
<keyword id="KW-0903">Direct protein sequencing</keyword>
<keyword id="KW-1015">Disulfide bond</keyword>
<keyword id="KW-1199">Hemostasis impairing toxin</keyword>
<keyword id="KW-0378">Hydrolase</keyword>
<keyword id="KW-0442">Lipid degradation</keyword>
<keyword id="KW-0443">Lipid metabolism</keyword>
<keyword id="KW-0479">Metal-binding</keyword>
<keyword id="KW-1201">Platelet aggregation inhibiting toxin</keyword>
<keyword id="KW-0964">Secreted</keyword>
<keyword id="KW-0800">Toxin</keyword>
<reference key="1">
    <citation type="journal article" date="2000" name="Arch. Biochem. Biophys.">
        <title>Phospholipase A(2) with platelet aggregation inhibitor activity from Austrelaps superbus venom: protein purification and cDNA cloning.</title>
        <authorList>
            <person name="Singh S.B."/>
            <person name="Armugam A."/>
            <person name="Kini R.M."/>
            <person name="Jeyaseelan K."/>
        </authorList>
    </citation>
    <scope>PROTEIN SEQUENCE</scope>
    <scope>MASS SPECTROMETRY</scope>
    <source>
        <tissue>Venom</tissue>
    </source>
</reference>